<comment type="function">
    <text evidence="1">Catalyzes the specific phosphorylation of 1,6-anhydro-N-acetylmuramic acid (anhMurNAc) with the simultaneous cleavage of the 1,6-anhydro ring, generating MurNAc-6-P. Is required for the utilization of anhMurNAc either imported from the medium or derived from its own cell wall murein, and thus plays a role in cell wall recycling.</text>
</comment>
<comment type="catalytic activity">
    <reaction evidence="1">
        <text>1,6-anhydro-N-acetyl-beta-muramate + ATP + H2O = N-acetyl-D-muramate 6-phosphate + ADP + H(+)</text>
        <dbReference type="Rhea" id="RHEA:24952"/>
        <dbReference type="ChEBI" id="CHEBI:15377"/>
        <dbReference type="ChEBI" id="CHEBI:15378"/>
        <dbReference type="ChEBI" id="CHEBI:30616"/>
        <dbReference type="ChEBI" id="CHEBI:58690"/>
        <dbReference type="ChEBI" id="CHEBI:58722"/>
        <dbReference type="ChEBI" id="CHEBI:456216"/>
        <dbReference type="EC" id="2.7.1.170"/>
    </reaction>
</comment>
<comment type="pathway">
    <text evidence="1">Amino-sugar metabolism; 1,6-anhydro-N-acetylmuramate degradation.</text>
</comment>
<comment type="pathway">
    <text evidence="1">Cell wall biogenesis; peptidoglycan recycling.</text>
</comment>
<comment type="similarity">
    <text evidence="1">Belongs to the anhydro-N-acetylmuramic acid kinase family.</text>
</comment>
<sequence>MKSGRFIGVMSGTSLDGVDVVLAAIDETMVAQQASLTWPIPVHLKKGILDICQGQPLTLSQLGQLDTQLGRLFAQAVNALLAQQRLQPRDIVAIGCHGQTVWHEPTGEAPHTLQIGDNNHIVAHTGITVVGDFRRRDIALGGQGAPLVPAFHHALLGHPTEKRMVLNIGGIANLSLLFPGQAVRGYDTGPGNMLMDAWIWRQCAQPYDKDAAWAKEGQVILPLLQKMLRDPYFAASAPKSTGREYFNYGWLERHLTAFPGADARDVQATLAELTAVSIAQQVLLNGGCERLMVCGGGSRNPLVMARLAALLPGIEVSTTDKAGISGDDMEALAFAWLAWRTLAGLPGNLPSVTGATEASVLGAIYPANPITQS</sequence>
<reference key="1">
    <citation type="journal article" date="2011" name="J. Bacteriol.">
        <title>Comparative genomics of 28 Salmonella enterica isolates: evidence for CRISPR-mediated adaptive sublineage evolution.</title>
        <authorList>
            <person name="Fricke W.F."/>
            <person name="Mammel M.K."/>
            <person name="McDermott P.F."/>
            <person name="Tartera C."/>
            <person name="White D.G."/>
            <person name="Leclerc J.E."/>
            <person name="Ravel J."/>
            <person name="Cebula T.A."/>
        </authorList>
    </citation>
    <scope>NUCLEOTIDE SEQUENCE [LARGE SCALE GENOMIC DNA]</scope>
    <source>
        <strain>SL483</strain>
    </source>
</reference>
<evidence type="ECO:0000255" key="1">
    <source>
        <dbReference type="HAMAP-Rule" id="MF_01270"/>
    </source>
</evidence>
<gene>
    <name evidence="1" type="primary">anmK</name>
    <name type="ordered locus">SeAg_B1728</name>
</gene>
<keyword id="KW-0067">ATP-binding</keyword>
<keyword id="KW-0119">Carbohydrate metabolism</keyword>
<keyword id="KW-0418">Kinase</keyword>
<keyword id="KW-0547">Nucleotide-binding</keyword>
<keyword id="KW-0808">Transferase</keyword>
<protein>
    <recommendedName>
        <fullName evidence="1">Anhydro-N-acetylmuramic acid kinase</fullName>
        <ecNumber evidence="1">2.7.1.170</ecNumber>
    </recommendedName>
    <alternativeName>
        <fullName evidence="1">AnhMurNAc kinase</fullName>
    </alternativeName>
</protein>
<accession>B5F6K1</accession>
<dbReference type="EC" id="2.7.1.170" evidence="1"/>
<dbReference type="EMBL" id="CP001138">
    <property type="protein sequence ID" value="ACH48662.1"/>
    <property type="molecule type" value="Genomic_DNA"/>
</dbReference>
<dbReference type="RefSeq" id="WP_000835021.1">
    <property type="nucleotide sequence ID" value="NC_011149.1"/>
</dbReference>
<dbReference type="SMR" id="B5F6K1"/>
<dbReference type="KEGG" id="sea:SeAg_B1728"/>
<dbReference type="HOGENOM" id="CLU_038782_0_0_6"/>
<dbReference type="UniPathway" id="UPA00343"/>
<dbReference type="UniPathway" id="UPA00544"/>
<dbReference type="Proteomes" id="UP000008819">
    <property type="component" value="Chromosome"/>
</dbReference>
<dbReference type="GO" id="GO:0005524">
    <property type="term" value="F:ATP binding"/>
    <property type="evidence" value="ECO:0007669"/>
    <property type="project" value="UniProtKB-UniRule"/>
</dbReference>
<dbReference type="GO" id="GO:0016301">
    <property type="term" value="F:kinase activity"/>
    <property type="evidence" value="ECO:0007669"/>
    <property type="project" value="UniProtKB-KW"/>
</dbReference>
<dbReference type="GO" id="GO:0016773">
    <property type="term" value="F:phosphotransferase activity, alcohol group as acceptor"/>
    <property type="evidence" value="ECO:0007669"/>
    <property type="project" value="UniProtKB-UniRule"/>
</dbReference>
<dbReference type="GO" id="GO:0097175">
    <property type="term" value="P:1,6-anhydro-N-acetyl-beta-muramic acid catabolic process"/>
    <property type="evidence" value="ECO:0007669"/>
    <property type="project" value="UniProtKB-UniRule"/>
</dbReference>
<dbReference type="GO" id="GO:0006040">
    <property type="term" value="P:amino sugar metabolic process"/>
    <property type="evidence" value="ECO:0007669"/>
    <property type="project" value="InterPro"/>
</dbReference>
<dbReference type="GO" id="GO:0009254">
    <property type="term" value="P:peptidoglycan turnover"/>
    <property type="evidence" value="ECO:0007669"/>
    <property type="project" value="UniProtKB-UniRule"/>
</dbReference>
<dbReference type="CDD" id="cd24050">
    <property type="entry name" value="ASKHA_NBD_ANMK"/>
    <property type="match status" value="1"/>
</dbReference>
<dbReference type="Gene3D" id="3.30.420.40">
    <property type="match status" value="2"/>
</dbReference>
<dbReference type="HAMAP" id="MF_01270">
    <property type="entry name" value="AnhMurNAc_kinase"/>
    <property type="match status" value="1"/>
</dbReference>
<dbReference type="InterPro" id="IPR005338">
    <property type="entry name" value="Anhydro_N_Ac-Mur_kinase"/>
</dbReference>
<dbReference type="InterPro" id="IPR043129">
    <property type="entry name" value="ATPase_NBD"/>
</dbReference>
<dbReference type="NCBIfam" id="NF007138">
    <property type="entry name" value="PRK09585.1-1"/>
    <property type="match status" value="1"/>
</dbReference>
<dbReference type="NCBIfam" id="NF007139">
    <property type="entry name" value="PRK09585.1-3"/>
    <property type="match status" value="1"/>
</dbReference>
<dbReference type="NCBIfam" id="NF007148">
    <property type="entry name" value="PRK09585.3-2"/>
    <property type="match status" value="1"/>
</dbReference>
<dbReference type="PANTHER" id="PTHR30605">
    <property type="entry name" value="ANHYDRO-N-ACETYLMURAMIC ACID KINASE"/>
    <property type="match status" value="1"/>
</dbReference>
<dbReference type="PANTHER" id="PTHR30605:SF0">
    <property type="entry name" value="ANHYDRO-N-ACETYLMURAMIC ACID KINASE"/>
    <property type="match status" value="1"/>
</dbReference>
<dbReference type="Pfam" id="PF03702">
    <property type="entry name" value="AnmK"/>
    <property type="match status" value="1"/>
</dbReference>
<dbReference type="SUPFAM" id="SSF53067">
    <property type="entry name" value="Actin-like ATPase domain"/>
    <property type="match status" value="1"/>
</dbReference>
<proteinExistence type="inferred from homology"/>
<name>ANMK_SALA4</name>
<feature type="chain" id="PRO_1000140167" description="Anhydro-N-acetylmuramic acid kinase">
    <location>
        <begin position="1"/>
        <end position="373"/>
    </location>
</feature>
<feature type="binding site" evidence="1">
    <location>
        <begin position="12"/>
        <end position="19"/>
    </location>
    <ligand>
        <name>ATP</name>
        <dbReference type="ChEBI" id="CHEBI:30616"/>
    </ligand>
</feature>
<organism>
    <name type="scientific">Salmonella agona (strain SL483)</name>
    <dbReference type="NCBI Taxonomy" id="454166"/>
    <lineage>
        <taxon>Bacteria</taxon>
        <taxon>Pseudomonadati</taxon>
        <taxon>Pseudomonadota</taxon>
        <taxon>Gammaproteobacteria</taxon>
        <taxon>Enterobacterales</taxon>
        <taxon>Enterobacteriaceae</taxon>
        <taxon>Salmonella</taxon>
    </lineage>
</organism>